<keyword id="KW-0067">ATP-binding</keyword>
<keyword id="KW-0175">Coiled coil</keyword>
<keyword id="KW-0418">Kinase</keyword>
<keyword id="KW-0460">Magnesium</keyword>
<keyword id="KW-0479">Metal-binding</keyword>
<keyword id="KW-0547">Nucleotide-binding</keyword>
<keyword id="KW-1185">Reference proteome</keyword>
<keyword id="KW-0723">Serine/threonine-protein kinase</keyword>
<keyword id="KW-0808">Transferase</keyword>
<organism>
    <name type="scientific">Dictyostelium discoideum</name>
    <name type="common">Social amoeba</name>
    <dbReference type="NCBI Taxonomy" id="44689"/>
    <lineage>
        <taxon>Eukaryota</taxon>
        <taxon>Amoebozoa</taxon>
        <taxon>Evosea</taxon>
        <taxon>Eumycetozoa</taxon>
        <taxon>Dictyostelia</taxon>
        <taxon>Dictyosteliales</taxon>
        <taxon>Dictyosteliaceae</taxon>
        <taxon>Dictyostelium</taxon>
    </lineage>
</organism>
<evidence type="ECO:0000250" key="1">
    <source>
        <dbReference type="UniProtKB" id="P28523"/>
    </source>
</evidence>
<evidence type="ECO:0000250" key="2">
    <source>
        <dbReference type="UniProtKB" id="Q869N2"/>
    </source>
</evidence>
<evidence type="ECO:0000255" key="3"/>
<evidence type="ECO:0000255" key="4">
    <source>
        <dbReference type="PROSITE-ProRule" id="PRU00057"/>
    </source>
</evidence>
<evidence type="ECO:0000255" key="5">
    <source>
        <dbReference type="PROSITE-ProRule" id="PRU00159"/>
    </source>
</evidence>
<evidence type="ECO:0000255" key="6">
    <source>
        <dbReference type="PROSITE-ProRule" id="PRU10027"/>
    </source>
</evidence>
<evidence type="ECO:0000256" key="7">
    <source>
        <dbReference type="SAM" id="MobiDB-lite"/>
    </source>
</evidence>
<evidence type="ECO:0000312" key="8">
    <source>
        <dbReference type="EMBL" id="EAL66025.1"/>
    </source>
</evidence>
<reference evidence="8" key="1">
    <citation type="journal article" date="2005" name="Nature">
        <title>The genome of the social amoeba Dictyostelium discoideum.</title>
        <authorList>
            <person name="Eichinger L."/>
            <person name="Pachebat J.A."/>
            <person name="Gloeckner G."/>
            <person name="Rajandream M.A."/>
            <person name="Sucgang R."/>
            <person name="Berriman M."/>
            <person name="Song J."/>
            <person name="Olsen R."/>
            <person name="Szafranski K."/>
            <person name="Xu Q."/>
            <person name="Tunggal B."/>
            <person name="Kummerfeld S."/>
            <person name="Madera M."/>
            <person name="Konfortov B.A."/>
            <person name="Rivero F."/>
            <person name="Bankier A.T."/>
            <person name="Lehmann R."/>
            <person name="Hamlin N."/>
            <person name="Davies R."/>
            <person name="Gaudet P."/>
            <person name="Fey P."/>
            <person name="Pilcher K."/>
            <person name="Chen G."/>
            <person name="Saunders D."/>
            <person name="Sodergren E.J."/>
            <person name="Davis P."/>
            <person name="Kerhornou A."/>
            <person name="Nie X."/>
            <person name="Hall N."/>
            <person name="Anjard C."/>
            <person name="Hemphill L."/>
            <person name="Bason N."/>
            <person name="Farbrother P."/>
            <person name="Desany B."/>
            <person name="Just E."/>
            <person name="Morio T."/>
            <person name="Rost R."/>
            <person name="Churcher C.M."/>
            <person name="Cooper J."/>
            <person name="Haydock S."/>
            <person name="van Driessche N."/>
            <person name="Cronin A."/>
            <person name="Goodhead I."/>
            <person name="Muzny D.M."/>
            <person name="Mourier T."/>
            <person name="Pain A."/>
            <person name="Lu M."/>
            <person name="Harper D."/>
            <person name="Lindsay R."/>
            <person name="Hauser H."/>
            <person name="James K.D."/>
            <person name="Quiles M."/>
            <person name="Madan Babu M."/>
            <person name="Saito T."/>
            <person name="Buchrieser C."/>
            <person name="Wardroper A."/>
            <person name="Felder M."/>
            <person name="Thangavelu M."/>
            <person name="Johnson D."/>
            <person name="Knights A."/>
            <person name="Loulseged H."/>
            <person name="Mungall K.L."/>
            <person name="Oliver K."/>
            <person name="Price C."/>
            <person name="Quail M.A."/>
            <person name="Urushihara H."/>
            <person name="Hernandez J."/>
            <person name="Rabbinowitsch E."/>
            <person name="Steffen D."/>
            <person name="Sanders M."/>
            <person name="Ma J."/>
            <person name="Kohara Y."/>
            <person name="Sharp S."/>
            <person name="Simmonds M.N."/>
            <person name="Spiegler S."/>
            <person name="Tivey A."/>
            <person name="Sugano S."/>
            <person name="White B."/>
            <person name="Walker D."/>
            <person name="Woodward J.R."/>
            <person name="Winckler T."/>
            <person name="Tanaka Y."/>
            <person name="Shaulsky G."/>
            <person name="Schleicher M."/>
            <person name="Weinstock G.M."/>
            <person name="Rosenthal A."/>
            <person name="Cox E.C."/>
            <person name="Chisholm R.L."/>
            <person name="Gibbs R.A."/>
            <person name="Loomis W.F."/>
            <person name="Platzer M."/>
            <person name="Kay R.R."/>
            <person name="Williams J.G."/>
            <person name="Dear P.H."/>
            <person name="Noegel A.A."/>
            <person name="Barrell B.G."/>
            <person name="Kuspa A."/>
        </authorList>
    </citation>
    <scope>NUCLEOTIDE SEQUENCE [LARGE SCALE GENOMIC DNA]</scope>
    <source>
        <strain evidence="8">AX4</strain>
    </source>
</reference>
<feature type="chain" id="PRO_0000363943" description="Serine/threonine-protein kinase pakG">
    <location>
        <begin position="1"/>
        <end position="1179"/>
    </location>
</feature>
<feature type="domain" description="CRIB" evidence="4">
    <location>
        <begin position="111"/>
        <end position="124"/>
    </location>
</feature>
<feature type="domain" description="Protein kinase" evidence="5">
    <location>
        <begin position="139"/>
        <end position="390"/>
    </location>
</feature>
<feature type="region of interest" description="Disordered" evidence="7">
    <location>
        <begin position="414"/>
        <end position="469"/>
    </location>
</feature>
<feature type="region of interest" description="Disordered" evidence="7">
    <location>
        <begin position="589"/>
        <end position="631"/>
    </location>
</feature>
<feature type="region of interest" description="Disordered" evidence="7">
    <location>
        <begin position="705"/>
        <end position="1086"/>
    </location>
</feature>
<feature type="region of interest" description="Disordered" evidence="7">
    <location>
        <begin position="1121"/>
        <end position="1179"/>
    </location>
</feature>
<feature type="coiled-coil region" evidence="3">
    <location>
        <begin position="12"/>
        <end position="53"/>
    </location>
</feature>
<feature type="coiled-coil region" evidence="3">
    <location>
        <begin position="621"/>
        <end position="668"/>
    </location>
</feature>
<feature type="compositionally biased region" description="Low complexity" evidence="7">
    <location>
        <begin position="705"/>
        <end position="723"/>
    </location>
</feature>
<feature type="compositionally biased region" description="Low complexity" evidence="7">
    <location>
        <begin position="743"/>
        <end position="761"/>
    </location>
</feature>
<feature type="compositionally biased region" description="Pro residues" evidence="7">
    <location>
        <begin position="762"/>
        <end position="776"/>
    </location>
</feature>
<feature type="compositionally biased region" description="Low complexity" evidence="7">
    <location>
        <begin position="777"/>
        <end position="788"/>
    </location>
</feature>
<feature type="compositionally biased region" description="Low complexity" evidence="7">
    <location>
        <begin position="812"/>
        <end position="833"/>
    </location>
</feature>
<feature type="compositionally biased region" description="Polar residues" evidence="7">
    <location>
        <begin position="834"/>
        <end position="857"/>
    </location>
</feature>
<feature type="compositionally biased region" description="Low complexity" evidence="7">
    <location>
        <begin position="864"/>
        <end position="891"/>
    </location>
</feature>
<feature type="compositionally biased region" description="Polar residues" evidence="7">
    <location>
        <begin position="892"/>
        <end position="946"/>
    </location>
</feature>
<feature type="compositionally biased region" description="Pro residues" evidence="7">
    <location>
        <begin position="954"/>
        <end position="963"/>
    </location>
</feature>
<feature type="compositionally biased region" description="Low complexity" evidence="7">
    <location>
        <begin position="964"/>
        <end position="997"/>
    </location>
</feature>
<feature type="compositionally biased region" description="Low complexity" evidence="7">
    <location>
        <begin position="1024"/>
        <end position="1046"/>
    </location>
</feature>
<feature type="compositionally biased region" description="Low complexity" evidence="7">
    <location>
        <begin position="1053"/>
        <end position="1077"/>
    </location>
</feature>
<feature type="compositionally biased region" description="Polar residues" evidence="7">
    <location>
        <begin position="1121"/>
        <end position="1135"/>
    </location>
</feature>
<feature type="compositionally biased region" description="Low complexity" evidence="7">
    <location>
        <begin position="1137"/>
        <end position="1158"/>
    </location>
</feature>
<feature type="active site" description="Proton acceptor" evidence="1 5 6">
    <location>
        <position position="257"/>
    </location>
</feature>
<feature type="binding site" evidence="1 5">
    <location>
        <begin position="145"/>
        <end position="153"/>
    </location>
    <ligand>
        <name>ATP</name>
        <dbReference type="ChEBI" id="CHEBI:30616"/>
    </ligand>
</feature>
<feature type="binding site" evidence="1 5">
    <location>
        <position position="168"/>
    </location>
    <ligand>
        <name>ATP</name>
        <dbReference type="ChEBI" id="CHEBI:30616"/>
    </ligand>
</feature>
<proteinExistence type="inferred from homology"/>
<accession>Q54RV3</accession>
<name>PAKG_DICDI</name>
<comment type="catalytic activity">
    <reaction evidence="2">
        <text>L-seryl-[protein] + ATP = O-phospho-L-seryl-[protein] + ADP + H(+)</text>
        <dbReference type="Rhea" id="RHEA:17989"/>
        <dbReference type="Rhea" id="RHEA-COMP:9863"/>
        <dbReference type="Rhea" id="RHEA-COMP:11604"/>
        <dbReference type="ChEBI" id="CHEBI:15378"/>
        <dbReference type="ChEBI" id="CHEBI:29999"/>
        <dbReference type="ChEBI" id="CHEBI:30616"/>
        <dbReference type="ChEBI" id="CHEBI:83421"/>
        <dbReference type="ChEBI" id="CHEBI:456216"/>
        <dbReference type="EC" id="2.7.11.1"/>
    </reaction>
</comment>
<comment type="catalytic activity">
    <reaction evidence="2">
        <text>L-threonyl-[protein] + ATP = O-phospho-L-threonyl-[protein] + ADP + H(+)</text>
        <dbReference type="Rhea" id="RHEA:46608"/>
        <dbReference type="Rhea" id="RHEA-COMP:11060"/>
        <dbReference type="Rhea" id="RHEA-COMP:11605"/>
        <dbReference type="ChEBI" id="CHEBI:15378"/>
        <dbReference type="ChEBI" id="CHEBI:30013"/>
        <dbReference type="ChEBI" id="CHEBI:30616"/>
        <dbReference type="ChEBI" id="CHEBI:61977"/>
        <dbReference type="ChEBI" id="CHEBI:456216"/>
        <dbReference type="EC" id="2.7.11.1"/>
    </reaction>
</comment>
<comment type="cofactor">
    <cofactor evidence="2">
        <name>Mg(2+)</name>
        <dbReference type="ChEBI" id="CHEBI:18420"/>
    </cofactor>
</comment>
<comment type="similarity">
    <text evidence="2">Belongs to the protein kinase superfamily. STE Ser/Thr protein kinase family. STE20 subfamily.</text>
</comment>
<sequence length="1179" mass="128266">MEEKIKSNLIHSKTNEDIELIKQKLKEDRELLEKERAQFEEERKIIFESLNKVVGSGSANITKNIAKALKKAEKKNGVGSNLNLANSSSGSNISVYNNNNNNNNNNNSNNIGTPFNVQHKVHVDFDYKWSGCQDLEQVFLIDCILGTGSYGTVYKAIHKDTNFVLAIKSIPIKESEEIEKEISILKKCKSQNIVSYFGSGQQGDNLWILMEYCSANSIRDMLELTEKSLTEKQISVILQQALKGLHYLHQSNIIHRDIKAANILINEDAIVKLADFGVSSQLEDSLRGEASQLVGTPLWMAPEIIKRQNYNNKCDIWSLGITAIEMAESFPPLYTMPPTRAMLMIPNKPPPTLSKPHHFSKELNDFIGQCCQKDPEKRPSAIELLTHPFLVQNISTPQEVLKPLIDECLKKSIKKKKQSPNNDQPPPPQTPNKLSPPDTPLPNVPVLGKNQGLLNKSNGMKKSHGSSLDEAESMNTFILKSTIGSSSNGSNDTGGDDFDCGTMILKDDTCINGSGNADKISTIPAFIAALNKSNGKVITQNQQQQQQQPIASSLQQSNPIASIVNENQYPNTIEKRGLSSINSNNSLLIGNSGNNKSQNFNNFNNNNNNNNNNNNNNNNNNNNNNNNNNNNEFLINQIKKELILDFNENMKQYINQQLTNLKEEMLKEISKIVIANIPQAPIKTSQSVFNQQLSAAAIIHPISSSSSSSSSFLNSSPSSSNSSATIFKKFPNPPPTPVLINKLPPSQQSTPVTTTTTTSSPSPSPSPSPSPSPSSPLPSSSTSTVNTPNKPPINYRKSKELDSTINIFNGLNNNNTNNNNNNNNSNNNNNNNNVIQSPKLNNRPLSPTTPTKQFNNRPPSPSKFNNRPPSPSKFNNRPPSPSNRPLSPKNSYNSLEKSNNGSISNNRPLSPKNSLEKSTTQNNTSSEDISTTTVTVTSEQGGTPITTPMAFLPRPKPSPPPIPMNKSSPKRAPSPSSNRRLSSSFTAQSSTASTIAALGKQSSMSPNSPLIKERVPPPLPPPRTTITSSTNSPIKPLSPLNKSPNSPYVPPRITTSNISNNSNINNNNNNNSNSSSNGSGGTPITLKRASTTISPIMISSNSPKVMGSNVNKPLALSRNSTEINLPSSSPSTPQKPNTPSSIPTTPTTPTTNGGSVSSKSSTIGRKTVLQVKSIFSPKK</sequence>
<gene>
    <name evidence="8" type="primary">pakG</name>
    <name type="ORF">DDB_G0282891</name>
</gene>
<dbReference type="EC" id="2.7.11.1"/>
<dbReference type="EMBL" id="AAFI02000047">
    <property type="protein sequence ID" value="EAL66025.1"/>
    <property type="molecule type" value="Genomic_DNA"/>
</dbReference>
<dbReference type="RefSeq" id="XP_639384.1">
    <property type="nucleotide sequence ID" value="XM_634292.1"/>
</dbReference>
<dbReference type="SMR" id="Q54RV3"/>
<dbReference type="FunCoup" id="Q54RV3">
    <property type="interactions" value="666"/>
</dbReference>
<dbReference type="STRING" id="44689.Q54RV3"/>
<dbReference type="GlyGen" id="Q54RV3">
    <property type="glycosylation" value="1 site"/>
</dbReference>
<dbReference type="PaxDb" id="44689-DDB0229411"/>
<dbReference type="EnsemblProtists" id="EAL66025">
    <property type="protein sequence ID" value="EAL66025"/>
    <property type="gene ID" value="DDB_G0282891"/>
</dbReference>
<dbReference type="GeneID" id="8623822"/>
<dbReference type="KEGG" id="ddi:DDB_G0282891"/>
<dbReference type="dictyBase" id="DDB_G0282891">
    <property type="gene designation" value="pakG"/>
</dbReference>
<dbReference type="VEuPathDB" id="AmoebaDB:DDB_G0282891"/>
<dbReference type="eggNOG" id="KOG0574">
    <property type="taxonomic scope" value="Eukaryota"/>
</dbReference>
<dbReference type="HOGENOM" id="CLU_273250_0_0_1"/>
<dbReference type="InParanoid" id="Q54RV3"/>
<dbReference type="OMA" id="HLEYQFL"/>
<dbReference type="PRO" id="PR:Q54RV3"/>
<dbReference type="Proteomes" id="UP000002195">
    <property type="component" value="Chromosome 3"/>
</dbReference>
<dbReference type="GO" id="GO:0005737">
    <property type="term" value="C:cytoplasm"/>
    <property type="evidence" value="ECO:0000318"/>
    <property type="project" value="GO_Central"/>
</dbReference>
<dbReference type="GO" id="GO:0005524">
    <property type="term" value="F:ATP binding"/>
    <property type="evidence" value="ECO:0000250"/>
    <property type="project" value="dictyBase"/>
</dbReference>
<dbReference type="GO" id="GO:0046872">
    <property type="term" value="F:metal ion binding"/>
    <property type="evidence" value="ECO:0007669"/>
    <property type="project" value="UniProtKB-KW"/>
</dbReference>
<dbReference type="GO" id="GO:0106310">
    <property type="term" value="F:protein serine kinase activity"/>
    <property type="evidence" value="ECO:0007669"/>
    <property type="project" value="RHEA"/>
</dbReference>
<dbReference type="GO" id="GO:0004674">
    <property type="term" value="F:protein serine/threonine kinase activity"/>
    <property type="evidence" value="ECO:0000250"/>
    <property type="project" value="dictyBase"/>
</dbReference>
<dbReference type="GO" id="GO:0035556">
    <property type="term" value="P:intracellular signal transduction"/>
    <property type="evidence" value="ECO:0000318"/>
    <property type="project" value="GO_Central"/>
</dbReference>
<dbReference type="GO" id="GO:0090090">
    <property type="term" value="P:negative regulation of canonical Wnt signaling pathway"/>
    <property type="evidence" value="ECO:0000318"/>
    <property type="project" value="GO_Central"/>
</dbReference>
<dbReference type="GO" id="GO:0043065">
    <property type="term" value="P:positive regulation of apoptotic process"/>
    <property type="evidence" value="ECO:0000318"/>
    <property type="project" value="GO_Central"/>
</dbReference>
<dbReference type="GO" id="GO:0006468">
    <property type="term" value="P:protein phosphorylation"/>
    <property type="evidence" value="ECO:0000250"/>
    <property type="project" value="dictyBase"/>
</dbReference>
<dbReference type="GO" id="GO:0043408">
    <property type="term" value="P:regulation of MAPK cascade"/>
    <property type="evidence" value="ECO:0000318"/>
    <property type="project" value="GO_Central"/>
</dbReference>
<dbReference type="FunFam" id="1.10.510.10:FF:000499">
    <property type="entry name" value="Serine/threonine-protein kinase KIC1"/>
    <property type="match status" value="1"/>
</dbReference>
<dbReference type="Gene3D" id="1.10.510.10">
    <property type="entry name" value="Transferase(Phosphotransferase) domain 1"/>
    <property type="match status" value="1"/>
</dbReference>
<dbReference type="InterPro" id="IPR000095">
    <property type="entry name" value="CRIB_dom"/>
</dbReference>
<dbReference type="InterPro" id="IPR011009">
    <property type="entry name" value="Kinase-like_dom_sf"/>
</dbReference>
<dbReference type="InterPro" id="IPR000719">
    <property type="entry name" value="Prot_kinase_dom"/>
</dbReference>
<dbReference type="InterPro" id="IPR017441">
    <property type="entry name" value="Protein_kinase_ATP_BS"/>
</dbReference>
<dbReference type="InterPro" id="IPR001245">
    <property type="entry name" value="Ser-Thr/Tyr_kinase_cat_dom"/>
</dbReference>
<dbReference type="InterPro" id="IPR008271">
    <property type="entry name" value="Ser/Thr_kinase_AS"/>
</dbReference>
<dbReference type="InterPro" id="IPR050629">
    <property type="entry name" value="STE20/SPS1-PAK"/>
</dbReference>
<dbReference type="PANTHER" id="PTHR48012:SF28">
    <property type="entry name" value="SERINE_THREONINE-PROTEIN KINASE PAKE-RELATED"/>
    <property type="match status" value="1"/>
</dbReference>
<dbReference type="PANTHER" id="PTHR48012">
    <property type="entry name" value="STERILE20-LIKE KINASE, ISOFORM B-RELATED"/>
    <property type="match status" value="1"/>
</dbReference>
<dbReference type="Pfam" id="PF00069">
    <property type="entry name" value="Pkinase"/>
    <property type="match status" value="1"/>
</dbReference>
<dbReference type="PRINTS" id="PR01217">
    <property type="entry name" value="PRICHEXTENSN"/>
</dbReference>
<dbReference type="PRINTS" id="PR00109">
    <property type="entry name" value="TYRKINASE"/>
</dbReference>
<dbReference type="SMART" id="SM00285">
    <property type="entry name" value="PBD"/>
    <property type="match status" value="1"/>
</dbReference>
<dbReference type="SMART" id="SM00220">
    <property type="entry name" value="S_TKc"/>
    <property type="match status" value="1"/>
</dbReference>
<dbReference type="SUPFAM" id="SSF56112">
    <property type="entry name" value="Protein kinase-like (PK-like)"/>
    <property type="match status" value="1"/>
</dbReference>
<dbReference type="PROSITE" id="PS50108">
    <property type="entry name" value="CRIB"/>
    <property type="match status" value="1"/>
</dbReference>
<dbReference type="PROSITE" id="PS00107">
    <property type="entry name" value="PROTEIN_KINASE_ATP"/>
    <property type="match status" value="1"/>
</dbReference>
<dbReference type="PROSITE" id="PS50011">
    <property type="entry name" value="PROTEIN_KINASE_DOM"/>
    <property type="match status" value="1"/>
</dbReference>
<dbReference type="PROSITE" id="PS00108">
    <property type="entry name" value="PROTEIN_KINASE_ST"/>
    <property type="match status" value="1"/>
</dbReference>
<protein>
    <recommendedName>
        <fullName evidence="2">Serine/threonine-protein kinase pakG</fullName>
        <ecNumber>2.7.11.1</ecNumber>
    </recommendedName>
</protein>